<dbReference type="EC" id="2.7.1.33" evidence="1"/>
<dbReference type="EMBL" id="CP000872">
    <property type="protein sequence ID" value="ABX63116.1"/>
    <property type="molecule type" value="Genomic_DNA"/>
</dbReference>
<dbReference type="RefSeq" id="WP_004684544.1">
    <property type="nucleotide sequence ID" value="NC_010103.1"/>
</dbReference>
<dbReference type="SMR" id="A9M9S1"/>
<dbReference type="GeneID" id="97534650"/>
<dbReference type="KEGG" id="bcs:BCAN_A2133"/>
<dbReference type="HOGENOM" id="CLU_053818_1_1_5"/>
<dbReference type="PhylomeDB" id="A9M9S1"/>
<dbReference type="UniPathway" id="UPA00241">
    <property type="reaction ID" value="UER00352"/>
</dbReference>
<dbReference type="Proteomes" id="UP000001385">
    <property type="component" value="Chromosome I"/>
</dbReference>
<dbReference type="GO" id="GO:0005737">
    <property type="term" value="C:cytoplasm"/>
    <property type="evidence" value="ECO:0007669"/>
    <property type="project" value="UniProtKB-SubCell"/>
</dbReference>
<dbReference type="GO" id="GO:0005524">
    <property type="term" value="F:ATP binding"/>
    <property type="evidence" value="ECO:0007669"/>
    <property type="project" value="UniProtKB-UniRule"/>
</dbReference>
<dbReference type="GO" id="GO:0004594">
    <property type="term" value="F:pantothenate kinase activity"/>
    <property type="evidence" value="ECO:0007669"/>
    <property type="project" value="UniProtKB-UniRule"/>
</dbReference>
<dbReference type="GO" id="GO:0015937">
    <property type="term" value="P:coenzyme A biosynthetic process"/>
    <property type="evidence" value="ECO:0007669"/>
    <property type="project" value="UniProtKB-UniRule"/>
</dbReference>
<dbReference type="CDD" id="cd02025">
    <property type="entry name" value="PanK"/>
    <property type="match status" value="1"/>
</dbReference>
<dbReference type="Gene3D" id="3.40.50.300">
    <property type="entry name" value="P-loop containing nucleotide triphosphate hydrolases"/>
    <property type="match status" value="1"/>
</dbReference>
<dbReference type="HAMAP" id="MF_00215">
    <property type="entry name" value="Pantothen_kinase_1"/>
    <property type="match status" value="1"/>
</dbReference>
<dbReference type="InterPro" id="IPR027417">
    <property type="entry name" value="P-loop_NTPase"/>
</dbReference>
<dbReference type="InterPro" id="IPR004566">
    <property type="entry name" value="PanK"/>
</dbReference>
<dbReference type="InterPro" id="IPR006083">
    <property type="entry name" value="PRK/URK"/>
</dbReference>
<dbReference type="NCBIfam" id="TIGR00554">
    <property type="entry name" value="panK_bact"/>
    <property type="match status" value="1"/>
</dbReference>
<dbReference type="PANTHER" id="PTHR10285">
    <property type="entry name" value="URIDINE KINASE"/>
    <property type="match status" value="1"/>
</dbReference>
<dbReference type="Pfam" id="PF00485">
    <property type="entry name" value="PRK"/>
    <property type="match status" value="1"/>
</dbReference>
<dbReference type="PIRSF" id="PIRSF000545">
    <property type="entry name" value="Pantothenate_kin"/>
    <property type="match status" value="1"/>
</dbReference>
<dbReference type="SUPFAM" id="SSF52540">
    <property type="entry name" value="P-loop containing nucleoside triphosphate hydrolases"/>
    <property type="match status" value="1"/>
</dbReference>
<proteinExistence type="inferred from homology"/>
<keyword id="KW-0067">ATP-binding</keyword>
<keyword id="KW-0173">Coenzyme A biosynthesis</keyword>
<keyword id="KW-0963">Cytoplasm</keyword>
<keyword id="KW-0418">Kinase</keyword>
<keyword id="KW-0547">Nucleotide-binding</keyword>
<keyword id="KW-1185">Reference proteome</keyword>
<keyword id="KW-0808">Transferase</keyword>
<accession>A9M9S1</accession>
<name>COAA_BRUC2</name>
<gene>
    <name evidence="1" type="primary">coaA</name>
    <name type="ordered locus">BCAN_A2133</name>
</gene>
<organism>
    <name type="scientific">Brucella canis (strain ATCC 23365 / NCTC 10854 / RM-666)</name>
    <dbReference type="NCBI Taxonomy" id="483179"/>
    <lineage>
        <taxon>Bacteria</taxon>
        <taxon>Pseudomonadati</taxon>
        <taxon>Pseudomonadota</taxon>
        <taxon>Alphaproteobacteria</taxon>
        <taxon>Hyphomicrobiales</taxon>
        <taxon>Brucellaceae</taxon>
        <taxon>Brucella/Ochrobactrum group</taxon>
        <taxon>Brucella</taxon>
    </lineage>
</organism>
<evidence type="ECO:0000255" key="1">
    <source>
        <dbReference type="HAMAP-Rule" id="MF_00215"/>
    </source>
</evidence>
<feature type="chain" id="PRO_1000078052" description="Pantothenate kinase">
    <location>
        <begin position="1"/>
        <end position="322"/>
    </location>
</feature>
<feature type="binding site" evidence="1">
    <location>
        <begin position="100"/>
        <end position="107"/>
    </location>
    <ligand>
        <name>ATP</name>
        <dbReference type="ChEBI" id="CHEBI:30616"/>
    </ligand>
</feature>
<protein>
    <recommendedName>
        <fullName evidence="1">Pantothenate kinase</fullName>
        <ecNumber evidence="1">2.7.1.33</ecNumber>
    </recommendedName>
    <alternativeName>
        <fullName evidence="1">Pantothenic acid kinase</fullName>
    </alternativeName>
</protein>
<comment type="catalytic activity">
    <reaction evidence="1">
        <text>(R)-pantothenate + ATP = (R)-4'-phosphopantothenate + ADP + H(+)</text>
        <dbReference type="Rhea" id="RHEA:16373"/>
        <dbReference type="ChEBI" id="CHEBI:10986"/>
        <dbReference type="ChEBI" id="CHEBI:15378"/>
        <dbReference type="ChEBI" id="CHEBI:29032"/>
        <dbReference type="ChEBI" id="CHEBI:30616"/>
        <dbReference type="ChEBI" id="CHEBI:456216"/>
        <dbReference type="EC" id="2.7.1.33"/>
    </reaction>
</comment>
<comment type="pathway">
    <text evidence="1">Cofactor biosynthesis; coenzyme A biosynthesis; CoA from (R)-pantothenate: step 1/5.</text>
</comment>
<comment type="subcellular location">
    <subcellularLocation>
        <location evidence="1">Cytoplasm</location>
    </subcellularLocation>
</comment>
<comment type="similarity">
    <text evidence="1">Belongs to the prokaryotic pantothenate kinase family.</text>
</comment>
<reference key="1">
    <citation type="submission" date="2007-10" db="EMBL/GenBank/DDBJ databases">
        <title>Brucella canis ATCC 23365 whole genome shotgun sequencing project.</title>
        <authorList>
            <person name="Setubal J.C."/>
            <person name="Bowns C."/>
            <person name="Boyle S."/>
            <person name="Crasta O.R."/>
            <person name="Czar M.J."/>
            <person name="Dharmanolla C."/>
            <person name="Gillespie J.J."/>
            <person name="Kenyon R.W."/>
            <person name="Lu J."/>
            <person name="Mane S."/>
            <person name="Mohapatra S."/>
            <person name="Nagrani S."/>
            <person name="Purkayastha A."/>
            <person name="Rajasimha H.K."/>
            <person name="Shallom J.M."/>
            <person name="Shallom S."/>
            <person name="Shukla M."/>
            <person name="Snyder E.E."/>
            <person name="Sobral B.W."/>
            <person name="Wattam A.R."/>
            <person name="Will R."/>
            <person name="Williams K."/>
            <person name="Yoo H."/>
            <person name="Bruce D."/>
            <person name="Detter C."/>
            <person name="Munk C."/>
            <person name="Brettin T.S."/>
        </authorList>
    </citation>
    <scope>NUCLEOTIDE SEQUENCE [LARGE SCALE GENOMIC DNA]</scope>
    <source>
        <strain>ATCC 23365 / NCTC 10854 / RM-666</strain>
    </source>
</reference>
<sequence length="322" mass="37477">MWEKVDQLTPSRYSPYRFFSAQEWAAFRADTPLTLTYEEVKRLRSLGDPIDLDEVRRIYLSLSRLLYAHVEASQLLFRQRQQFLNMEESYKTPFIIGVAGSVAVGKSTMARILKELLARWPSSPKVDLVTTDGFLYPNAVLREQNMMERKGFPESYDIGAVLRFLSAIKAGMSRVRAPLYSHLSYDVLPGEYQIVDKPDILIFEGINVLQVRDLPEDGKMVPFVSDFFDFSIYIDADPRLIHKWYIDRFMRLRETAFRDPQSFFHRYSQLSQEAARSIAEGLWQNINLKNLNENILPTRPRADLILRKGSDHLIEEVALRKI</sequence>